<dbReference type="EC" id="4.2.1.41" evidence="1"/>
<dbReference type="EMBL" id="CP001392">
    <property type="protein sequence ID" value="ACM33250.1"/>
    <property type="molecule type" value="Genomic_DNA"/>
</dbReference>
<dbReference type="SMR" id="B9MJB2"/>
<dbReference type="KEGG" id="dia:Dtpsy_1793"/>
<dbReference type="eggNOG" id="COG0329">
    <property type="taxonomic scope" value="Bacteria"/>
</dbReference>
<dbReference type="HOGENOM" id="CLU_049343_5_2_4"/>
<dbReference type="UniPathway" id="UPA00564">
    <property type="reaction ID" value="UER00628"/>
</dbReference>
<dbReference type="Proteomes" id="UP000000450">
    <property type="component" value="Chromosome"/>
</dbReference>
<dbReference type="GO" id="GO:0008840">
    <property type="term" value="F:4-hydroxy-tetrahydrodipicolinate synthase activity"/>
    <property type="evidence" value="ECO:0007669"/>
    <property type="project" value="TreeGrafter"/>
</dbReference>
<dbReference type="GO" id="GO:0047448">
    <property type="term" value="F:5-dehydro-4-deoxyglucarate dehydratase activity"/>
    <property type="evidence" value="ECO:0007669"/>
    <property type="project" value="UniProtKB-UniRule"/>
</dbReference>
<dbReference type="GO" id="GO:0042838">
    <property type="term" value="P:D-glucarate catabolic process"/>
    <property type="evidence" value="ECO:0007669"/>
    <property type="project" value="UniProtKB-UniRule"/>
</dbReference>
<dbReference type="CDD" id="cd00951">
    <property type="entry name" value="KDGDH"/>
    <property type="match status" value="1"/>
</dbReference>
<dbReference type="Gene3D" id="3.20.20.70">
    <property type="entry name" value="Aldolase class I"/>
    <property type="match status" value="1"/>
</dbReference>
<dbReference type="HAMAP" id="MF_00694">
    <property type="entry name" value="KDGDH"/>
    <property type="match status" value="1"/>
</dbReference>
<dbReference type="InterPro" id="IPR013785">
    <property type="entry name" value="Aldolase_TIM"/>
</dbReference>
<dbReference type="InterPro" id="IPR002220">
    <property type="entry name" value="DapA-like"/>
</dbReference>
<dbReference type="InterPro" id="IPR017655">
    <property type="entry name" value="Dehydro-deoxyglucarate_dehyd"/>
</dbReference>
<dbReference type="NCBIfam" id="TIGR03249">
    <property type="entry name" value="KdgD"/>
    <property type="match status" value="1"/>
</dbReference>
<dbReference type="NCBIfam" id="NF002958">
    <property type="entry name" value="PRK03620.1"/>
    <property type="match status" value="1"/>
</dbReference>
<dbReference type="PANTHER" id="PTHR12128:SF19">
    <property type="entry name" value="5-DEHYDRO-4-DEOXYGLUCARATE DEHYDRATASE 2-RELATED"/>
    <property type="match status" value="1"/>
</dbReference>
<dbReference type="PANTHER" id="PTHR12128">
    <property type="entry name" value="DIHYDRODIPICOLINATE SYNTHASE"/>
    <property type="match status" value="1"/>
</dbReference>
<dbReference type="Pfam" id="PF00701">
    <property type="entry name" value="DHDPS"/>
    <property type="match status" value="1"/>
</dbReference>
<dbReference type="PIRSF" id="PIRSF001365">
    <property type="entry name" value="DHDPS"/>
    <property type="match status" value="1"/>
</dbReference>
<dbReference type="SMART" id="SM01130">
    <property type="entry name" value="DHDPS"/>
    <property type="match status" value="1"/>
</dbReference>
<dbReference type="SUPFAM" id="SSF51569">
    <property type="entry name" value="Aldolase"/>
    <property type="match status" value="1"/>
</dbReference>
<gene>
    <name type="ordered locus">Dtpsy_1793</name>
</gene>
<name>KDGD_ACIET</name>
<reference key="1">
    <citation type="submission" date="2009-01" db="EMBL/GenBank/DDBJ databases">
        <title>Complete sequence of Diaphorobacter sp. TPSY.</title>
        <authorList>
            <consortium name="US DOE Joint Genome Institute"/>
            <person name="Lucas S."/>
            <person name="Copeland A."/>
            <person name="Lapidus A."/>
            <person name="Glavina del Rio T."/>
            <person name="Tice H."/>
            <person name="Bruce D."/>
            <person name="Goodwin L."/>
            <person name="Pitluck S."/>
            <person name="Chertkov O."/>
            <person name="Brettin T."/>
            <person name="Detter J.C."/>
            <person name="Han C."/>
            <person name="Larimer F."/>
            <person name="Land M."/>
            <person name="Hauser L."/>
            <person name="Kyrpides N."/>
            <person name="Mikhailova N."/>
            <person name="Coates J.D."/>
        </authorList>
    </citation>
    <scope>NUCLEOTIDE SEQUENCE [LARGE SCALE GENOMIC DNA]</scope>
    <source>
        <strain>TPSY</strain>
    </source>
</reference>
<protein>
    <recommendedName>
        <fullName evidence="1">Probable 5-dehydro-4-deoxyglucarate dehydratase</fullName>
        <ecNumber evidence="1">4.2.1.41</ecNumber>
    </recommendedName>
    <alternativeName>
        <fullName evidence="1">5-keto-4-deoxy-glucarate dehydratase</fullName>
        <shortName evidence="1">KDGDH</shortName>
    </alternativeName>
</protein>
<feature type="chain" id="PRO_1000147907" description="Probable 5-dehydro-4-deoxyglucarate dehydratase">
    <location>
        <begin position="1"/>
        <end position="303"/>
    </location>
</feature>
<proteinExistence type="inferred from homology"/>
<sequence>MTPQDLKNVMSSGLLSFPITDFHDNGDFNAKGYAERLEWLAPFGASALFAAGGTGEYFSLTASEYPQIIQTAVNTCRGKVPIIAGAGGPTRFAIECAQAAEKAGAHGILLMPHYMTEASQEGLAAHVEAVCKSVNFGVIIYNRGITRYTPETVARLCERNPNLVGFKDGVGDIEGMASMFLAMGDRLAYLGGLPTAEVYAAAYKALGTPVYSSAVFNFIPKTAMRFYEAVKNDDQATQHQLLKDFFMPYLKIRNRSAGYAVSIIKAGAKIVGHPAGPVRAPLADLQAEEIEMLAELIRKVEPV</sequence>
<keyword id="KW-0456">Lyase</keyword>
<keyword id="KW-1185">Reference proteome</keyword>
<comment type="catalytic activity">
    <reaction evidence="1">
        <text>5-dehydro-4-deoxy-D-glucarate + H(+) = 2,5-dioxopentanoate + CO2 + H2O</text>
        <dbReference type="Rhea" id="RHEA:24608"/>
        <dbReference type="ChEBI" id="CHEBI:15377"/>
        <dbReference type="ChEBI" id="CHEBI:15378"/>
        <dbReference type="ChEBI" id="CHEBI:16526"/>
        <dbReference type="ChEBI" id="CHEBI:42819"/>
        <dbReference type="ChEBI" id="CHEBI:58136"/>
        <dbReference type="EC" id="4.2.1.41"/>
    </reaction>
</comment>
<comment type="pathway">
    <text evidence="1">Carbohydrate acid metabolism; D-glucarate degradation; 2,5-dioxopentanoate from D-glucarate: step 2/2.</text>
</comment>
<comment type="similarity">
    <text evidence="1">Belongs to the DapA family.</text>
</comment>
<organism>
    <name type="scientific">Acidovorax ebreus (strain TPSY)</name>
    <name type="common">Diaphorobacter sp. (strain TPSY)</name>
    <dbReference type="NCBI Taxonomy" id="535289"/>
    <lineage>
        <taxon>Bacteria</taxon>
        <taxon>Pseudomonadati</taxon>
        <taxon>Pseudomonadota</taxon>
        <taxon>Betaproteobacteria</taxon>
        <taxon>Burkholderiales</taxon>
        <taxon>Comamonadaceae</taxon>
        <taxon>Diaphorobacter</taxon>
    </lineage>
</organism>
<evidence type="ECO:0000255" key="1">
    <source>
        <dbReference type="HAMAP-Rule" id="MF_00694"/>
    </source>
</evidence>
<accession>B9MJB2</accession>